<keyword id="KW-0012">Acyltransferase</keyword>
<keyword id="KW-0133">Cell shape</keyword>
<keyword id="KW-0961">Cell wall biogenesis/degradation</keyword>
<keyword id="KW-0963">Cytoplasm</keyword>
<keyword id="KW-0460">Magnesium</keyword>
<keyword id="KW-0479">Metal-binding</keyword>
<keyword id="KW-0511">Multifunctional enzyme</keyword>
<keyword id="KW-0548">Nucleotidyltransferase</keyword>
<keyword id="KW-0573">Peptidoglycan synthesis</keyword>
<keyword id="KW-1185">Reference proteome</keyword>
<keyword id="KW-0677">Repeat</keyword>
<keyword id="KW-0808">Transferase</keyword>
<comment type="function">
    <text evidence="1">Catalyzes the last two sequential reactions in the de novo biosynthetic pathway for UDP-N-acetylglucosamine (UDP-GlcNAc). The C-terminal domain catalyzes the transfer of acetyl group from acetyl coenzyme A to glucosamine-1-phosphate (GlcN-1-P) to produce N-acetylglucosamine-1-phosphate (GlcNAc-1-P), which is converted into UDP-GlcNAc by the transfer of uridine 5-monophosphate (from uridine 5-triphosphate), a reaction catalyzed by the N-terminal domain.</text>
</comment>
<comment type="catalytic activity">
    <reaction evidence="1">
        <text>alpha-D-glucosamine 1-phosphate + acetyl-CoA = N-acetyl-alpha-D-glucosamine 1-phosphate + CoA + H(+)</text>
        <dbReference type="Rhea" id="RHEA:13725"/>
        <dbReference type="ChEBI" id="CHEBI:15378"/>
        <dbReference type="ChEBI" id="CHEBI:57287"/>
        <dbReference type="ChEBI" id="CHEBI:57288"/>
        <dbReference type="ChEBI" id="CHEBI:57776"/>
        <dbReference type="ChEBI" id="CHEBI:58516"/>
        <dbReference type="EC" id="2.3.1.157"/>
    </reaction>
</comment>
<comment type="catalytic activity">
    <reaction evidence="1">
        <text>N-acetyl-alpha-D-glucosamine 1-phosphate + UTP + H(+) = UDP-N-acetyl-alpha-D-glucosamine + diphosphate</text>
        <dbReference type="Rhea" id="RHEA:13509"/>
        <dbReference type="ChEBI" id="CHEBI:15378"/>
        <dbReference type="ChEBI" id="CHEBI:33019"/>
        <dbReference type="ChEBI" id="CHEBI:46398"/>
        <dbReference type="ChEBI" id="CHEBI:57705"/>
        <dbReference type="ChEBI" id="CHEBI:57776"/>
        <dbReference type="EC" id="2.7.7.23"/>
    </reaction>
</comment>
<comment type="cofactor">
    <cofactor evidence="1">
        <name>Mg(2+)</name>
        <dbReference type="ChEBI" id="CHEBI:18420"/>
    </cofactor>
    <text evidence="1">Binds 1 Mg(2+) ion per subunit.</text>
</comment>
<comment type="pathway">
    <text evidence="1">Nucleotide-sugar biosynthesis; UDP-N-acetyl-alpha-D-glucosamine biosynthesis; N-acetyl-alpha-D-glucosamine 1-phosphate from alpha-D-glucosamine 6-phosphate (route II): step 2/2.</text>
</comment>
<comment type="pathway">
    <text evidence="1">Nucleotide-sugar biosynthesis; UDP-N-acetyl-alpha-D-glucosamine biosynthesis; UDP-N-acetyl-alpha-D-glucosamine from N-acetyl-alpha-D-glucosamine 1-phosphate: step 1/1.</text>
</comment>
<comment type="pathway">
    <text evidence="1">Bacterial outer membrane biogenesis; LPS lipid A biosynthesis.</text>
</comment>
<comment type="subunit">
    <text evidence="1">Homotrimer.</text>
</comment>
<comment type="subcellular location">
    <subcellularLocation>
        <location evidence="1">Cytoplasm</location>
    </subcellularLocation>
</comment>
<comment type="similarity">
    <text evidence="1">In the N-terminal section; belongs to the N-acetylglucosamine-1-phosphate uridyltransferase family.</text>
</comment>
<comment type="similarity">
    <text evidence="1">In the C-terminal section; belongs to the transferase hexapeptide repeat family.</text>
</comment>
<proteinExistence type="inferred from homology"/>
<feature type="chain" id="PRO_0000233773" description="Bifunctional protein GlmU">
    <location>
        <begin position="1"/>
        <end position="455"/>
    </location>
</feature>
<feature type="region of interest" description="Pyrophosphorylase" evidence="1">
    <location>
        <begin position="1"/>
        <end position="226"/>
    </location>
</feature>
<feature type="region of interest" description="Linker" evidence="1">
    <location>
        <begin position="227"/>
        <end position="247"/>
    </location>
</feature>
<feature type="region of interest" description="N-acetyltransferase" evidence="1">
    <location>
        <begin position="248"/>
        <end position="455"/>
    </location>
</feature>
<feature type="active site" description="Proton acceptor" evidence="1">
    <location>
        <position position="360"/>
    </location>
</feature>
<feature type="binding site" evidence="1">
    <location>
        <begin position="8"/>
        <end position="11"/>
    </location>
    <ligand>
        <name>UDP-N-acetyl-alpha-D-glucosamine</name>
        <dbReference type="ChEBI" id="CHEBI:57705"/>
    </ligand>
</feature>
<feature type="binding site" evidence="1">
    <location>
        <position position="22"/>
    </location>
    <ligand>
        <name>UDP-N-acetyl-alpha-D-glucosamine</name>
        <dbReference type="ChEBI" id="CHEBI:57705"/>
    </ligand>
</feature>
<feature type="binding site" evidence="1">
    <location>
        <position position="73"/>
    </location>
    <ligand>
        <name>UDP-N-acetyl-alpha-D-glucosamine</name>
        <dbReference type="ChEBI" id="CHEBI:57705"/>
    </ligand>
</feature>
<feature type="binding site" evidence="1">
    <location>
        <begin position="78"/>
        <end position="79"/>
    </location>
    <ligand>
        <name>UDP-N-acetyl-alpha-D-glucosamine</name>
        <dbReference type="ChEBI" id="CHEBI:57705"/>
    </ligand>
</feature>
<feature type="binding site" evidence="1">
    <location>
        <begin position="99"/>
        <end position="101"/>
    </location>
    <ligand>
        <name>UDP-N-acetyl-alpha-D-glucosamine</name>
        <dbReference type="ChEBI" id="CHEBI:57705"/>
    </ligand>
</feature>
<feature type="binding site" evidence="1">
    <location>
        <position position="101"/>
    </location>
    <ligand>
        <name>Mg(2+)</name>
        <dbReference type="ChEBI" id="CHEBI:18420"/>
    </ligand>
</feature>
<feature type="binding site" evidence="1">
    <location>
        <position position="136"/>
    </location>
    <ligand>
        <name>UDP-N-acetyl-alpha-D-glucosamine</name>
        <dbReference type="ChEBI" id="CHEBI:57705"/>
    </ligand>
</feature>
<feature type="binding site" evidence="1">
    <location>
        <position position="151"/>
    </location>
    <ligand>
        <name>UDP-N-acetyl-alpha-D-glucosamine</name>
        <dbReference type="ChEBI" id="CHEBI:57705"/>
    </ligand>
</feature>
<feature type="binding site" evidence="1">
    <location>
        <position position="166"/>
    </location>
    <ligand>
        <name>UDP-N-acetyl-alpha-D-glucosamine</name>
        <dbReference type="ChEBI" id="CHEBI:57705"/>
    </ligand>
</feature>
<feature type="binding site" evidence="1">
    <location>
        <position position="224"/>
    </location>
    <ligand>
        <name>Mg(2+)</name>
        <dbReference type="ChEBI" id="CHEBI:18420"/>
    </ligand>
</feature>
<feature type="binding site" evidence="1">
    <location>
        <position position="224"/>
    </location>
    <ligand>
        <name>UDP-N-acetyl-alpha-D-glucosamine</name>
        <dbReference type="ChEBI" id="CHEBI:57705"/>
    </ligand>
</feature>
<feature type="binding site" evidence="1">
    <location>
        <position position="330"/>
    </location>
    <ligand>
        <name>UDP-N-acetyl-alpha-D-glucosamine</name>
        <dbReference type="ChEBI" id="CHEBI:57705"/>
    </ligand>
</feature>
<feature type="binding site" evidence="1">
    <location>
        <position position="348"/>
    </location>
    <ligand>
        <name>UDP-N-acetyl-alpha-D-glucosamine</name>
        <dbReference type="ChEBI" id="CHEBI:57705"/>
    </ligand>
</feature>
<feature type="binding site" evidence="1">
    <location>
        <position position="363"/>
    </location>
    <ligand>
        <name>UDP-N-acetyl-alpha-D-glucosamine</name>
        <dbReference type="ChEBI" id="CHEBI:57705"/>
    </ligand>
</feature>
<feature type="binding site" evidence="1">
    <location>
        <position position="374"/>
    </location>
    <ligand>
        <name>UDP-N-acetyl-alpha-D-glucosamine</name>
        <dbReference type="ChEBI" id="CHEBI:57705"/>
    </ligand>
</feature>
<feature type="binding site" evidence="1">
    <location>
        <position position="377"/>
    </location>
    <ligand>
        <name>acetyl-CoA</name>
        <dbReference type="ChEBI" id="CHEBI:57288"/>
    </ligand>
</feature>
<feature type="binding site" evidence="1">
    <location>
        <begin position="383"/>
        <end position="384"/>
    </location>
    <ligand>
        <name>acetyl-CoA</name>
        <dbReference type="ChEBI" id="CHEBI:57288"/>
    </ligand>
</feature>
<feature type="binding site" evidence="1">
    <location>
        <position position="402"/>
    </location>
    <ligand>
        <name>acetyl-CoA</name>
        <dbReference type="ChEBI" id="CHEBI:57288"/>
    </ligand>
</feature>
<feature type="binding site" evidence="1">
    <location>
        <position position="420"/>
    </location>
    <ligand>
        <name>acetyl-CoA</name>
        <dbReference type="ChEBI" id="CHEBI:57288"/>
    </ligand>
</feature>
<feature type="binding site" evidence="1">
    <location>
        <position position="437"/>
    </location>
    <ligand>
        <name>acetyl-CoA</name>
        <dbReference type="ChEBI" id="CHEBI:57288"/>
    </ligand>
</feature>
<protein>
    <recommendedName>
        <fullName evidence="1">Bifunctional protein GlmU</fullName>
    </recommendedName>
    <domain>
        <recommendedName>
            <fullName evidence="1">UDP-N-acetylglucosamine pyrophosphorylase</fullName>
            <ecNumber evidence="1">2.7.7.23</ecNumber>
        </recommendedName>
        <alternativeName>
            <fullName evidence="1">N-acetylglucosamine-1-phosphate uridyltransferase</fullName>
        </alternativeName>
    </domain>
    <domain>
        <recommendedName>
            <fullName evidence="1">Glucosamine-1-phosphate N-acetyltransferase</fullName>
            <ecNumber evidence="1">2.3.1.157</ecNumber>
        </recommendedName>
    </domain>
</protein>
<name>GLMU_FRATT</name>
<reference key="1">
    <citation type="journal article" date="2005" name="Nat. Genet.">
        <title>The complete genome sequence of Francisella tularensis, the causative agent of tularemia.</title>
        <authorList>
            <person name="Larsson P."/>
            <person name="Oyston P.C.F."/>
            <person name="Chain P."/>
            <person name="Chu M.C."/>
            <person name="Duffield M."/>
            <person name="Fuxelius H.-H."/>
            <person name="Garcia E."/>
            <person name="Haelltorp G."/>
            <person name="Johansson D."/>
            <person name="Isherwood K.E."/>
            <person name="Karp P.D."/>
            <person name="Larsson E."/>
            <person name="Liu Y."/>
            <person name="Michell S."/>
            <person name="Prior J."/>
            <person name="Prior R."/>
            <person name="Malfatti S."/>
            <person name="Sjoestedt A."/>
            <person name="Svensson K."/>
            <person name="Thompson N."/>
            <person name="Vergez L."/>
            <person name="Wagg J.K."/>
            <person name="Wren B.W."/>
            <person name="Lindler L.E."/>
            <person name="Andersson S.G.E."/>
            <person name="Forsman M."/>
            <person name="Titball R.W."/>
        </authorList>
    </citation>
    <scope>NUCLEOTIDE SEQUENCE [LARGE SCALE GENOMIC DNA]</scope>
    <source>
        <strain>SCHU S4 / Schu 4</strain>
    </source>
</reference>
<evidence type="ECO:0000255" key="1">
    <source>
        <dbReference type="HAMAP-Rule" id="MF_01631"/>
    </source>
</evidence>
<organism>
    <name type="scientific">Francisella tularensis subsp. tularensis (strain SCHU S4 / Schu 4)</name>
    <dbReference type="NCBI Taxonomy" id="177416"/>
    <lineage>
        <taxon>Bacteria</taxon>
        <taxon>Pseudomonadati</taxon>
        <taxon>Pseudomonadota</taxon>
        <taxon>Gammaproteobacteria</taxon>
        <taxon>Thiotrichales</taxon>
        <taxon>Francisellaceae</taxon>
        <taxon>Francisella</taxon>
    </lineage>
</organism>
<dbReference type="EC" id="2.7.7.23" evidence="1"/>
<dbReference type="EC" id="2.3.1.157" evidence="1"/>
<dbReference type="EMBL" id="AJ749949">
    <property type="protein sequence ID" value="CAG45020.1"/>
    <property type="molecule type" value="Genomic_DNA"/>
</dbReference>
<dbReference type="RefSeq" id="WP_003027098.1">
    <property type="nucleotide sequence ID" value="NZ_CP010290.1"/>
</dbReference>
<dbReference type="RefSeq" id="YP_169432.1">
    <property type="nucleotide sequence ID" value="NC_006570.2"/>
</dbReference>
<dbReference type="SMR" id="Q5NHR0"/>
<dbReference type="IntAct" id="Q5NHR0">
    <property type="interactions" value="3"/>
</dbReference>
<dbReference type="STRING" id="177416.FTT_0387"/>
<dbReference type="DNASU" id="3191075"/>
<dbReference type="EnsemblBacteria" id="CAG45020">
    <property type="protein sequence ID" value="CAG45020"/>
    <property type="gene ID" value="FTT_0387"/>
</dbReference>
<dbReference type="KEGG" id="ftu:FTT_0387"/>
<dbReference type="eggNOG" id="COG1207">
    <property type="taxonomic scope" value="Bacteria"/>
</dbReference>
<dbReference type="OrthoDB" id="9775031at2"/>
<dbReference type="UniPathway" id="UPA00113">
    <property type="reaction ID" value="UER00532"/>
</dbReference>
<dbReference type="UniPathway" id="UPA00113">
    <property type="reaction ID" value="UER00533"/>
</dbReference>
<dbReference type="UniPathway" id="UPA00973"/>
<dbReference type="Proteomes" id="UP000001174">
    <property type="component" value="Chromosome"/>
</dbReference>
<dbReference type="GO" id="GO:0005737">
    <property type="term" value="C:cytoplasm"/>
    <property type="evidence" value="ECO:0007669"/>
    <property type="project" value="UniProtKB-SubCell"/>
</dbReference>
<dbReference type="GO" id="GO:0016020">
    <property type="term" value="C:membrane"/>
    <property type="evidence" value="ECO:0007669"/>
    <property type="project" value="GOC"/>
</dbReference>
<dbReference type="GO" id="GO:0019134">
    <property type="term" value="F:glucosamine-1-phosphate N-acetyltransferase activity"/>
    <property type="evidence" value="ECO:0007669"/>
    <property type="project" value="UniProtKB-UniRule"/>
</dbReference>
<dbReference type="GO" id="GO:0000287">
    <property type="term" value="F:magnesium ion binding"/>
    <property type="evidence" value="ECO:0007669"/>
    <property type="project" value="UniProtKB-UniRule"/>
</dbReference>
<dbReference type="GO" id="GO:0003977">
    <property type="term" value="F:UDP-N-acetylglucosamine diphosphorylase activity"/>
    <property type="evidence" value="ECO:0007669"/>
    <property type="project" value="UniProtKB-UniRule"/>
</dbReference>
<dbReference type="GO" id="GO:0000902">
    <property type="term" value="P:cell morphogenesis"/>
    <property type="evidence" value="ECO:0007669"/>
    <property type="project" value="UniProtKB-UniRule"/>
</dbReference>
<dbReference type="GO" id="GO:0071555">
    <property type="term" value="P:cell wall organization"/>
    <property type="evidence" value="ECO:0007669"/>
    <property type="project" value="UniProtKB-KW"/>
</dbReference>
<dbReference type="GO" id="GO:0009245">
    <property type="term" value="P:lipid A biosynthetic process"/>
    <property type="evidence" value="ECO:0007669"/>
    <property type="project" value="UniProtKB-UniRule"/>
</dbReference>
<dbReference type="GO" id="GO:0009252">
    <property type="term" value="P:peptidoglycan biosynthetic process"/>
    <property type="evidence" value="ECO:0007669"/>
    <property type="project" value="UniProtKB-UniRule"/>
</dbReference>
<dbReference type="GO" id="GO:0008360">
    <property type="term" value="P:regulation of cell shape"/>
    <property type="evidence" value="ECO:0007669"/>
    <property type="project" value="UniProtKB-KW"/>
</dbReference>
<dbReference type="GO" id="GO:0006048">
    <property type="term" value="P:UDP-N-acetylglucosamine biosynthetic process"/>
    <property type="evidence" value="ECO:0007669"/>
    <property type="project" value="UniProtKB-UniPathway"/>
</dbReference>
<dbReference type="CDD" id="cd02540">
    <property type="entry name" value="GT2_GlmU_N_bac"/>
    <property type="match status" value="1"/>
</dbReference>
<dbReference type="CDD" id="cd03353">
    <property type="entry name" value="LbH_GlmU_C"/>
    <property type="match status" value="1"/>
</dbReference>
<dbReference type="Gene3D" id="2.160.10.10">
    <property type="entry name" value="Hexapeptide repeat proteins"/>
    <property type="match status" value="1"/>
</dbReference>
<dbReference type="Gene3D" id="3.90.550.10">
    <property type="entry name" value="Spore Coat Polysaccharide Biosynthesis Protein SpsA, Chain A"/>
    <property type="match status" value="1"/>
</dbReference>
<dbReference type="HAMAP" id="MF_01631">
    <property type="entry name" value="GlmU"/>
    <property type="match status" value="1"/>
</dbReference>
<dbReference type="InterPro" id="IPR005882">
    <property type="entry name" value="Bifunctional_GlmU"/>
</dbReference>
<dbReference type="InterPro" id="IPR050065">
    <property type="entry name" value="GlmU-like"/>
</dbReference>
<dbReference type="InterPro" id="IPR038009">
    <property type="entry name" value="GlmU_C_LbH"/>
</dbReference>
<dbReference type="InterPro" id="IPR001451">
    <property type="entry name" value="Hexapep"/>
</dbReference>
<dbReference type="InterPro" id="IPR018357">
    <property type="entry name" value="Hexapep_transf_CS"/>
</dbReference>
<dbReference type="InterPro" id="IPR025877">
    <property type="entry name" value="MobA-like_NTP_Trfase"/>
</dbReference>
<dbReference type="InterPro" id="IPR029044">
    <property type="entry name" value="Nucleotide-diphossugar_trans"/>
</dbReference>
<dbReference type="InterPro" id="IPR011004">
    <property type="entry name" value="Trimer_LpxA-like_sf"/>
</dbReference>
<dbReference type="NCBIfam" id="TIGR01173">
    <property type="entry name" value="glmU"/>
    <property type="match status" value="1"/>
</dbReference>
<dbReference type="PANTHER" id="PTHR43584:SF3">
    <property type="entry name" value="BIFUNCTIONAL PROTEIN GLMU"/>
    <property type="match status" value="1"/>
</dbReference>
<dbReference type="PANTHER" id="PTHR43584">
    <property type="entry name" value="NUCLEOTIDYL TRANSFERASE"/>
    <property type="match status" value="1"/>
</dbReference>
<dbReference type="Pfam" id="PF00132">
    <property type="entry name" value="Hexapep"/>
    <property type="match status" value="2"/>
</dbReference>
<dbReference type="Pfam" id="PF12804">
    <property type="entry name" value="NTP_transf_3"/>
    <property type="match status" value="1"/>
</dbReference>
<dbReference type="SUPFAM" id="SSF53448">
    <property type="entry name" value="Nucleotide-diphospho-sugar transferases"/>
    <property type="match status" value="1"/>
</dbReference>
<dbReference type="SUPFAM" id="SSF51161">
    <property type="entry name" value="Trimeric LpxA-like enzymes"/>
    <property type="match status" value="1"/>
</dbReference>
<dbReference type="PROSITE" id="PS00101">
    <property type="entry name" value="HEXAPEP_TRANSFERASES"/>
    <property type="match status" value="1"/>
</dbReference>
<gene>
    <name evidence="1" type="primary">glmU</name>
    <name type="ordered locus">FTT_0387</name>
</gene>
<accession>Q5NHR0</accession>
<sequence length="455" mass="49656">MGLSVVILAAGKGSRMNSNKPKVLQTLAAKTLIEHVVSSVEKLNPDNIVVVTGHLKEQVEDALQGRNITFVYQQQQLGTGHAVLQALPYLKEQKVLILYGDVPLISTEVLENLVDTTNDDDLGVLTAFVENPQGLGRIVRDKFGAVTEIVEEKDANDIQRQIKEINTGIYCVHKNLLQKWLPEIKANNVQKEYYLTDIITFAKADHVSINVTHPINEFEILGVNDRTQLASLERVWQRNVAEKIMAKGVSIADPNRFDVRGNLDVGKDCWIDINVIIKGNVKLGNNVVIGANCILKNCIIEDNVRIKSNSMVDGSIIREGAIVGPFARVRPECDVKEGAVIGNFVEAKKTILGKGSKASHLTYLGDSEIGANCNIGAGVITCNYDGVNKHKTVIGDYAFIGSDSQLIAPVNIGQGATVGAGSTIVKDVPADNLAISRARQRHIDTWQRSVKKTDK</sequence>